<accession>Q7U366</accession>
<dbReference type="EC" id="2.5.1.75" evidence="1"/>
<dbReference type="EMBL" id="BX640411">
    <property type="protein sequence ID" value="CAE40623.1"/>
    <property type="molecule type" value="Genomic_DNA"/>
</dbReference>
<dbReference type="RefSeq" id="NP_879128.1">
    <property type="nucleotide sequence ID" value="NC_002929.2"/>
</dbReference>
<dbReference type="RefSeq" id="WP_003814337.1">
    <property type="nucleotide sequence ID" value="NZ_CP039022.1"/>
</dbReference>
<dbReference type="SMR" id="Q7U366"/>
<dbReference type="STRING" id="257313.BP0243"/>
<dbReference type="PaxDb" id="257313-BP0243"/>
<dbReference type="GeneID" id="69603500"/>
<dbReference type="KEGG" id="bpe:BP0243"/>
<dbReference type="PATRIC" id="fig|257313.5.peg.264"/>
<dbReference type="eggNOG" id="COG0324">
    <property type="taxonomic scope" value="Bacteria"/>
</dbReference>
<dbReference type="HOGENOM" id="CLU_032616_0_0_4"/>
<dbReference type="Proteomes" id="UP000002676">
    <property type="component" value="Chromosome"/>
</dbReference>
<dbReference type="GO" id="GO:0005524">
    <property type="term" value="F:ATP binding"/>
    <property type="evidence" value="ECO:0007669"/>
    <property type="project" value="UniProtKB-UniRule"/>
</dbReference>
<dbReference type="GO" id="GO:0052381">
    <property type="term" value="F:tRNA dimethylallyltransferase activity"/>
    <property type="evidence" value="ECO:0007669"/>
    <property type="project" value="UniProtKB-UniRule"/>
</dbReference>
<dbReference type="GO" id="GO:0006400">
    <property type="term" value="P:tRNA modification"/>
    <property type="evidence" value="ECO:0007669"/>
    <property type="project" value="TreeGrafter"/>
</dbReference>
<dbReference type="FunFam" id="1.10.20.140:FF:000001">
    <property type="entry name" value="tRNA dimethylallyltransferase"/>
    <property type="match status" value="1"/>
</dbReference>
<dbReference type="Gene3D" id="1.10.20.140">
    <property type="match status" value="1"/>
</dbReference>
<dbReference type="Gene3D" id="3.40.50.300">
    <property type="entry name" value="P-loop containing nucleotide triphosphate hydrolases"/>
    <property type="match status" value="1"/>
</dbReference>
<dbReference type="HAMAP" id="MF_00185">
    <property type="entry name" value="IPP_trans"/>
    <property type="match status" value="1"/>
</dbReference>
<dbReference type="InterPro" id="IPR039657">
    <property type="entry name" value="Dimethylallyltransferase"/>
</dbReference>
<dbReference type="InterPro" id="IPR018022">
    <property type="entry name" value="IPT"/>
</dbReference>
<dbReference type="InterPro" id="IPR027417">
    <property type="entry name" value="P-loop_NTPase"/>
</dbReference>
<dbReference type="NCBIfam" id="TIGR00174">
    <property type="entry name" value="miaA"/>
    <property type="match status" value="1"/>
</dbReference>
<dbReference type="PANTHER" id="PTHR11088">
    <property type="entry name" value="TRNA DIMETHYLALLYLTRANSFERASE"/>
    <property type="match status" value="1"/>
</dbReference>
<dbReference type="PANTHER" id="PTHR11088:SF60">
    <property type="entry name" value="TRNA DIMETHYLALLYLTRANSFERASE"/>
    <property type="match status" value="1"/>
</dbReference>
<dbReference type="Pfam" id="PF01715">
    <property type="entry name" value="IPPT"/>
    <property type="match status" value="1"/>
</dbReference>
<dbReference type="SUPFAM" id="SSF52540">
    <property type="entry name" value="P-loop containing nucleoside triphosphate hydrolases"/>
    <property type="match status" value="1"/>
</dbReference>
<organism>
    <name type="scientific">Bordetella pertussis (strain Tohama I / ATCC BAA-589 / NCTC 13251)</name>
    <dbReference type="NCBI Taxonomy" id="257313"/>
    <lineage>
        <taxon>Bacteria</taxon>
        <taxon>Pseudomonadati</taxon>
        <taxon>Pseudomonadota</taxon>
        <taxon>Betaproteobacteria</taxon>
        <taxon>Burkholderiales</taxon>
        <taxon>Alcaligenaceae</taxon>
        <taxon>Bordetella</taxon>
    </lineage>
</organism>
<name>MIAA_BORPE</name>
<keyword id="KW-0067">ATP-binding</keyword>
<keyword id="KW-0460">Magnesium</keyword>
<keyword id="KW-0547">Nucleotide-binding</keyword>
<keyword id="KW-1185">Reference proteome</keyword>
<keyword id="KW-0808">Transferase</keyword>
<keyword id="KW-0819">tRNA processing</keyword>
<proteinExistence type="inferred from homology"/>
<feature type="chain" id="PRO_0000163886" description="tRNA dimethylallyltransferase">
    <location>
        <begin position="1"/>
        <end position="313"/>
    </location>
</feature>
<feature type="region of interest" description="Interaction with substrate tRNA" evidence="1">
    <location>
        <begin position="36"/>
        <end position="39"/>
    </location>
</feature>
<feature type="region of interest" description="Interaction with substrate tRNA" evidence="1">
    <location>
        <begin position="160"/>
        <end position="164"/>
    </location>
</feature>
<feature type="region of interest" description="Interaction with substrate tRNA" evidence="1">
    <location>
        <begin position="244"/>
        <end position="249"/>
    </location>
</feature>
<feature type="binding site" evidence="1">
    <location>
        <begin position="11"/>
        <end position="18"/>
    </location>
    <ligand>
        <name>ATP</name>
        <dbReference type="ChEBI" id="CHEBI:30616"/>
    </ligand>
</feature>
<feature type="binding site" evidence="1">
    <location>
        <begin position="13"/>
        <end position="18"/>
    </location>
    <ligand>
        <name>substrate</name>
    </ligand>
</feature>
<feature type="site" description="Interaction with substrate tRNA" evidence="1">
    <location>
        <position position="102"/>
    </location>
</feature>
<feature type="site" description="Interaction with substrate tRNA" evidence="1">
    <location>
        <position position="124"/>
    </location>
</feature>
<protein>
    <recommendedName>
        <fullName evidence="1">tRNA dimethylallyltransferase</fullName>
        <ecNumber evidence="1">2.5.1.75</ecNumber>
    </recommendedName>
    <alternativeName>
        <fullName evidence="1">Dimethylallyl diphosphate:tRNA dimethylallyltransferase</fullName>
        <shortName evidence="1">DMAPP:tRNA dimethylallyltransferase</shortName>
        <shortName evidence="1">DMATase</shortName>
    </alternativeName>
    <alternativeName>
        <fullName evidence="1">Isopentenyl-diphosphate:tRNA isopentenyltransferase</fullName>
        <shortName evidence="1">IPP transferase</shortName>
        <shortName evidence="1">IPPT</shortName>
        <shortName evidence="1">IPTase</shortName>
    </alternativeName>
</protein>
<comment type="function">
    <text evidence="1">Catalyzes the transfer of a dimethylallyl group onto the adenine at position 37 in tRNAs that read codons beginning with uridine, leading to the formation of N6-(dimethylallyl)adenosine (i(6)A).</text>
</comment>
<comment type="catalytic activity">
    <reaction evidence="1">
        <text>adenosine(37) in tRNA + dimethylallyl diphosphate = N(6)-dimethylallyladenosine(37) in tRNA + diphosphate</text>
        <dbReference type="Rhea" id="RHEA:26482"/>
        <dbReference type="Rhea" id="RHEA-COMP:10162"/>
        <dbReference type="Rhea" id="RHEA-COMP:10375"/>
        <dbReference type="ChEBI" id="CHEBI:33019"/>
        <dbReference type="ChEBI" id="CHEBI:57623"/>
        <dbReference type="ChEBI" id="CHEBI:74411"/>
        <dbReference type="ChEBI" id="CHEBI:74415"/>
        <dbReference type="EC" id="2.5.1.75"/>
    </reaction>
</comment>
<comment type="cofactor">
    <cofactor evidence="1">
        <name>Mg(2+)</name>
        <dbReference type="ChEBI" id="CHEBI:18420"/>
    </cofactor>
</comment>
<comment type="subunit">
    <text evidence="1">Monomer.</text>
</comment>
<comment type="similarity">
    <text evidence="1">Belongs to the IPP transferase family.</text>
</comment>
<gene>
    <name evidence="1" type="primary">miaA</name>
    <name type="ordered locus">BP0243</name>
</gene>
<sequence length="313" mass="34049">MTPRAIICLAGPTAAGKSASTLALAQRWPLEIINVDSATIYRGMDIGTAKPSAAERAQVPQHLLDIRDPAQSYSAAEFRADALRLIAEIHARGRIPLLAGGTMLYYKALREGLDDLPQADPALRAELEARAARLGWPALHAELALLDPATAARLSPNDSQRIQRALEICRLAGQPMSALLQGERRGDAPSPYRYVTLSLEPSERAALHARIAQRFDAMLAAGLVEEVRGLHARPDLHPGLPSVRCVGYRQMWSYLDGDIDLDTAREQGVAATRQLAKRQLTWLRAQPERVIIDCLAGDAVARTVDAMARALPD</sequence>
<reference key="1">
    <citation type="journal article" date="2003" name="Nat. Genet.">
        <title>Comparative analysis of the genome sequences of Bordetella pertussis, Bordetella parapertussis and Bordetella bronchiseptica.</title>
        <authorList>
            <person name="Parkhill J."/>
            <person name="Sebaihia M."/>
            <person name="Preston A."/>
            <person name="Murphy L.D."/>
            <person name="Thomson N.R."/>
            <person name="Harris D.E."/>
            <person name="Holden M.T.G."/>
            <person name="Churcher C.M."/>
            <person name="Bentley S.D."/>
            <person name="Mungall K.L."/>
            <person name="Cerdeno-Tarraga A.-M."/>
            <person name="Temple L."/>
            <person name="James K.D."/>
            <person name="Harris B."/>
            <person name="Quail M.A."/>
            <person name="Achtman M."/>
            <person name="Atkin R."/>
            <person name="Baker S."/>
            <person name="Basham D."/>
            <person name="Bason N."/>
            <person name="Cherevach I."/>
            <person name="Chillingworth T."/>
            <person name="Collins M."/>
            <person name="Cronin A."/>
            <person name="Davis P."/>
            <person name="Doggett J."/>
            <person name="Feltwell T."/>
            <person name="Goble A."/>
            <person name="Hamlin N."/>
            <person name="Hauser H."/>
            <person name="Holroyd S."/>
            <person name="Jagels K."/>
            <person name="Leather S."/>
            <person name="Moule S."/>
            <person name="Norberczak H."/>
            <person name="O'Neil S."/>
            <person name="Ormond D."/>
            <person name="Price C."/>
            <person name="Rabbinowitsch E."/>
            <person name="Rutter S."/>
            <person name="Sanders M."/>
            <person name="Saunders D."/>
            <person name="Seeger K."/>
            <person name="Sharp S."/>
            <person name="Simmonds M."/>
            <person name="Skelton J."/>
            <person name="Squares R."/>
            <person name="Squares S."/>
            <person name="Stevens K."/>
            <person name="Unwin L."/>
            <person name="Whitehead S."/>
            <person name="Barrell B.G."/>
            <person name="Maskell D.J."/>
        </authorList>
    </citation>
    <scope>NUCLEOTIDE SEQUENCE [LARGE SCALE GENOMIC DNA]</scope>
    <source>
        <strain>Tohama I / ATCC BAA-589 / NCTC 13251</strain>
    </source>
</reference>
<evidence type="ECO:0000255" key="1">
    <source>
        <dbReference type="HAMAP-Rule" id="MF_00185"/>
    </source>
</evidence>